<comment type="function">
    <text evidence="1">Catalyzes the methylthiolation of N6-(dimethylallyl)adenosine (i(6)A), leading to the formation of 2-methylthio-N6-(dimethylallyl)adenosine (ms(2)i(6)A) at position 37 in tRNAs that read codons beginning with uridine.</text>
</comment>
<comment type="catalytic activity">
    <reaction evidence="1">
        <text>N(6)-dimethylallyladenosine(37) in tRNA + (sulfur carrier)-SH + AH2 + 2 S-adenosyl-L-methionine = 2-methylsulfanyl-N(6)-dimethylallyladenosine(37) in tRNA + (sulfur carrier)-H + 5'-deoxyadenosine + L-methionine + A + S-adenosyl-L-homocysteine + 2 H(+)</text>
        <dbReference type="Rhea" id="RHEA:37067"/>
        <dbReference type="Rhea" id="RHEA-COMP:10375"/>
        <dbReference type="Rhea" id="RHEA-COMP:10376"/>
        <dbReference type="Rhea" id="RHEA-COMP:14737"/>
        <dbReference type="Rhea" id="RHEA-COMP:14739"/>
        <dbReference type="ChEBI" id="CHEBI:13193"/>
        <dbReference type="ChEBI" id="CHEBI:15378"/>
        <dbReference type="ChEBI" id="CHEBI:17319"/>
        <dbReference type="ChEBI" id="CHEBI:17499"/>
        <dbReference type="ChEBI" id="CHEBI:29917"/>
        <dbReference type="ChEBI" id="CHEBI:57844"/>
        <dbReference type="ChEBI" id="CHEBI:57856"/>
        <dbReference type="ChEBI" id="CHEBI:59789"/>
        <dbReference type="ChEBI" id="CHEBI:64428"/>
        <dbReference type="ChEBI" id="CHEBI:74415"/>
        <dbReference type="ChEBI" id="CHEBI:74417"/>
        <dbReference type="EC" id="2.8.4.3"/>
    </reaction>
</comment>
<comment type="cofactor">
    <cofactor evidence="1">
        <name>[4Fe-4S] cluster</name>
        <dbReference type="ChEBI" id="CHEBI:49883"/>
    </cofactor>
    <text evidence="1">Binds 2 [4Fe-4S] clusters. One cluster is coordinated with 3 cysteines and an exchangeable S-adenosyl-L-methionine.</text>
</comment>
<comment type="subunit">
    <text evidence="1">Monomer.</text>
</comment>
<comment type="subcellular location">
    <subcellularLocation>
        <location evidence="1">Cytoplasm</location>
    </subcellularLocation>
</comment>
<comment type="similarity">
    <text evidence="1">Belongs to the methylthiotransferase family. MiaB subfamily.</text>
</comment>
<comment type="sequence caution" evidence="3">
    <conflict type="erroneous initiation">
        <sequence resource="EMBL-CDS" id="AAO69807"/>
    </conflict>
</comment>
<comment type="sequence caution" evidence="3">
    <conflict type="erroneous initiation">
        <sequence resource="EMBL-CDS" id="CAD05141"/>
    </conflict>
</comment>
<protein>
    <recommendedName>
        <fullName evidence="1">tRNA-2-methylthio-N(6)-dimethylallyladenosine synthase</fullName>
        <ecNumber evidence="1">2.8.4.3</ecNumber>
    </recommendedName>
    <alternativeName>
        <fullName evidence="1">(Dimethylallyl)adenosine tRNA methylthiotransferase MiaB</fullName>
    </alternativeName>
    <alternativeName>
        <fullName evidence="1">tRNA-i(6)A37 methylthiotransferase</fullName>
    </alternativeName>
</protein>
<name>MIAB_SALTI</name>
<feature type="chain" id="PRO_0000374531" description="tRNA-2-methylthio-N(6)-dimethylallyladenosine synthase">
    <location>
        <begin position="1"/>
        <end position="474"/>
    </location>
</feature>
<feature type="domain" description="MTTase N-terminal" evidence="1">
    <location>
        <begin position="3"/>
        <end position="120"/>
    </location>
</feature>
<feature type="domain" description="Radical SAM core" evidence="2">
    <location>
        <begin position="143"/>
        <end position="375"/>
    </location>
</feature>
<feature type="domain" description="TRAM" evidence="1">
    <location>
        <begin position="378"/>
        <end position="441"/>
    </location>
</feature>
<feature type="binding site" evidence="1">
    <location>
        <position position="12"/>
    </location>
    <ligand>
        <name>[4Fe-4S] cluster</name>
        <dbReference type="ChEBI" id="CHEBI:49883"/>
        <label>1</label>
    </ligand>
</feature>
<feature type="binding site" evidence="1">
    <location>
        <position position="49"/>
    </location>
    <ligand>
        <name>[4Fe-4S] cluster</name>
        <dbReference type="ChEBI" id="CHEBI:49883"/>
        <label>1</label>
    </ligand>
</feature>
<feature type="binding site" evidence="1">
    <location>
        <position position="83"/>
    </location>
    <ligand>
        <name>[4Fe-4S] cluster</name>
        <dbReference type="ChEBI" id="CHEBI:49883"/>
        <label>1</label>
    </ligand>
</feature>
<feature type="binding site" evidence="1">
    <location>
        <position position="157"/>
    </location>
    <ligand>
        <name>[4Fe-4S] cluster</name>
        <dbReference type="ChEBI" id="CHEBI:49883"/>
        <label>2</label>
        <note>4Fe-4S-S-AdoMet</note>
    </ligand>
</feature>
<feature type="binding site" evidence="1">
    <location>
        <position position="161"/>
    </location>
    <ligand>
        <name>[4Fe-4S] cluster</name>
        <dbReference type="ChEBI" id="CHEBI:49883"/>
        <label>2</label>
        <note>4Fe-4S-S-AdoMet</note>
    </ligand>
</feature>
<feature type="binding site" evidence="1">
    <location>
        <position position="164"/>
    </location>
    <ligand>
        <name>[4Fe-4S] cluster</name>
        <dbReference type="ChEBI" id="CHEBI:49883"/>
        <label>2</label>
        <note>4Fe-4S-S-AdoMet</note>
    </ligand>
</feature>
<gene>
    <name evidence="1" type="primary">miaB</name>
    <name type="ordered locus">STY0716</name>
    <name type="ordered locus">t2203</name>
</gene>
<accession>Q8Z8G5</accession>
<accession>Q7C8L0</accession>
<reference key="1">
    <citation type="journal article" date="2001" name="Nature">
        <title>Complete genome sequence of a multiple drug resistant Salmonella enterica serovar Typhi CT18.</title>
        <authorList>
            <person name="Parkhill J."/>
            <person name="Dougan G."/>
            <person name="James K.D."/>
            <person name="Thomson N.R."/>
            <person name="Pickard D."/>
            <person name="Wain J."/>
            <person name="Churcher C.M."/>
            <person name="Mungall K.L."/>
            <person name="Bentley S.D."/>
            <person name="Holden M.T.G."/>
            <person name="Sebaihia M."/>
            <person name="Baker S."/>
            <person name="Basham D."/>
            <person name="Brooks K."/>
            <person name="Chillingworth T."/>
            <person name="Connerton P."/>
            <person name="Cronin A."/>
            <person name="Davis P."/>
            <person name="Davies R.M."/>
            <person name="Dowd L."/>
            <person name="White N."/>
            <person name="Farrar J."/>
            <person name="Feltwell T."/>
            <person name="Hamlin N."/>
            <person name="Haque A."/>
            <person name="Hien T.T."/>
            <person name="Holroyd S."/>
            <person name="Jagels K."/>
            <person name="Krogh A."/>
            <person name="Larsen T.S."/>
            <person name="Leather S."/>
            <person name="Moule S."/>
            <person name="O'Gaora P."/>
            <person name="Parry C."/>
            <person name="Quail M.A."/>
            <person name="Rutherford K.M."/>
            <person name="Simmonds M."/>
            <person name="Skelton J."/>
            <person name="Stevens K."/>
            <person name="Whitehead S."/>
            <person name="Barrell B.G."/>
        </authorList>
    </citation>
    <scope>NUCLEOTIDE SEQUENCE [LARGE SCALE GENOMIC DNA]</scope>
    <source>
        <strain>CT18</strain>
    </source>
</reference>
<reference key="2">
    <citation type="journal article" date="2003" name="J. Bacteriol.">
        <title>Comparative genomics of Salmonella enterica serovar Typhi strains Ty2 and CT18.</title>
        <authorList>
            <person name="Deng W."/>
            <person name="Liou S.-R."/>
            <person name="Plunkett G. III"/>
            <person name="Mayhew G.F."/>
            <person name="Rose D.J."/>
            <person name="Burland V."/>
            <person name="Kodoyianni V."/>
            <person name="Schwartz D.C."/>
            <person name="Blattner F.R."/>
        </authorList>
    </citation>
    <scope>NUCLEOTIDE SEQUENCE [LARGE SCALE GENOMIC DNA]</scope>
    <source>
        <strain>ATCC 700931 / Ty2</strain>
    </source>
</reference>
<organism>
    <name type="scientific">Salmonella typhi</name>
    <dbReference type="NCBI Taxonomy" id="90370"/>
    <lineage>
        <taxon>Bacteria</taxon>
        <taxon>Pseudomonadati</taxon>
        <taxon>Pseudomonadota</taxon>
        <taxon>Gammaproteobacteria</taxon>
        <taxon>Enterobacterales</taxon>
        <taxon>Enterobacteriaceae</taxon>
        <taxon>Salmonella</taxon>
    </lineage>
</organism>
<proteinExistence type="inferred from homology"/>
<sequence>MTKKLHIKTWGCQMNEYDSSKMADLLDATHGYQLTDVAEEADVLLLNTCSIREKAQEKVFHQLGRWRLLKEKNPDLIIGVGGCVASQEGEHIRQRAHYVDIIFGPQTLHRLPEMINSVRGDRSPVVDISFPEIEKFDRLPEPRAEGPTAFVSIMEGCNKYCTYCVVPYTRGEEVSRPSDDILFEIAQLAAQGVREVNLLGQNVNAWRGENYDGTTGTFADLLRLVAAIDGIDRIRFTTSHPIEFTDDIIEVYRDTPELVSFLHLPVQSGSDRVLNLMGRTHTALEYKAIIRKLRAARPDIQISSDFIVGFPGETTDDFEKTMKLIADVNFDMSYSFIFSARPGTPAADMVDDVPEEEKKQRLYILQERINQQAMAWSRRMLGTTQRILVEGTSRKNIMELSGRTENNRVVNFEGTPEMIGKFVDVEITDVYPNSLRGKVVRTEDEMGLRVAETPESVIARTRKENELGVGFYQP</sequence>
<keyword id="KW-0004">4Fe-4S</keyword>
<keyword id="KW-0963">Cytoplasm</keyword>
<keyword id="KW-0408">Iron</keyword>
<keyword id="KW-0411">Iron-sulfur</keyword>
<keyword id="KW-0479">Metal-binding</keyword>
<keyword id="KW-0949">S-adenosyl-L-methionine</keyword>
<keyword id="KW-0808">Transferase</keyword>
<keyword id="KW-0819">tRNA processing</keyword>
<evidence type="ECO:0000255" key="1">
    <source>
        <dbReference type="HAMAP-Rule" id="MF_01864"/>
    </source>
</evidence>
<evidence type="ECO:0000255" key="2">
    <source>
        <dbReference type="PROSITE-ProRule" id="PRU01266"/>
    </source>
</evidence>
<evidence type="ECO:0000305" key="3"/>
<dbReference type="EC" id="2.8.4.3" evidence="1"/>
<dbReference type="EMBL" id="AE014613">
    <property type="protein sequence ID" value="AAO69807.1"/>
    <property type="status" value="ALT_INIT"/>
    <property type="molecule type" value="Genomic_DNA"/>
</dbReference>
<dbReference type="EMBL" id="AL513382">
    <property type="protein sequence ID" value="CAD05141.1"/>
    <property type="status" value="ALT_INIT"/>
    <property type="molecule type" value="Genomic_DNA"/>
</dbReference>
<dbReference type="RefSeq" id="NP_455239.1">
    <property type="nucleotide sequence ID" value="NC_003198.1"/>
</dbReference>
<dbReference type="RefSeq" id="WP_001519200.1">
    <property type="nucleotide sequence ID" value="NZ_WSUR01000015.1"/>
</dbReference>
<dbReference type="SMR" id="Q8Z8G5"/>
<dbReference type="STRING" id="220341.gene:17584722"/>
<dbReference type="KEGG" id="stt:t2203"/>
<dbReference type="KEGG" id="sty:STY0716"/>
<dbReference type="PATRIC" id="fig|220341.7.peg.721"/>
<dbReference type="eggNOG" id="COG0621">
    <property type="taxonomic scope" value="Bacteria"/>
</dbReference>
<dbReference type="HOGENOM" id="CLU_018697_2_0_6"/>
<dbReference type="OMA" id="CEHFHIP"/>
<dbReference type="OrthoDB" id="9805215at2"/>
<dbReference type="Proteomes" id="UP000000541">
    <property type="component" value="Chromosome"/>
</dbReference>
<dbReference type="Proteomes" id="UP000002670">
    <property type="component" value="Chromosome"/>
</dbReference>
<dbReference type="GO" id="GO:0005829">
    <property type="term" value="C:cytosol"/>
    <property type="evidence" value="ECO:0007669"/>
    <property type="project" value="TreeGrafter"/>
</dbReference>
<dbReference type="GO" id="GO:0051539">
    <property type="term" value="F:4 iron, 4 sulfur cluster binding"/>
    <property type="evidence" value="ECO:0007669"/>
    <property type="project" value="UniProtKB-UniRule"/>
</dbReference>
<dbReference type="GO" id="GO:0046872">
    <property type="term" value="F:metal ion binding"/>
    <property type="evidence" value="ECO:0007669"/>
    <property type="project" value="UniProtKB-KW"/>
</dbReference>
<dbReference type="GO" id="GO:0035597">
    <property type="term" value="F:N6-isopentenyladenosine methylthiotransferase activity"/>
    <property type="evidence" value="ECO:0007669"/>
    <property type="project" value="TreeGrafter"/>
</dbReference>
<dbReference type="CDD" id="cd01335">
    <property type="entry name" value="Radical_SAM"/>
    <property type="match status" value="1"/>
</dbReference>
<dbReference type="FunFam" id="3.40.50.12160:FF:000001">
    <property type="entry name" value="tRNA-2-methylthio-N(6)-dimethylallyladenosine synthase"/>
    <property type="match status" value="1"/>
</dbReference>
<dbReference type="FunFam" id="3.80.30.20:FF:000001">
    <property type="entry name" value="tRNA-2-methylthio-N(6)-dimethylallyladenosine synthase 2"/>
    <property type="match status" value="1"/>
</dbReference>
<dbReference type="Gene3D" id="3.40.50.12160">
    <property type="entry name" value="Methylthiotransferase, N-terminal domain"/>
    <property type="match status" value="1"/>
</dbReference>
<dbReference type="Gene3D" id="3.80.30.20">
    <property type="entry name" value="tm_1862 like domain"/>
    <property type="match status" value="1"/>
</dbReference>
<dbReference type="HAMAP" id="MF_01864">
    <property type="entry name" value="tRNA_metthiotr_MiaB"/>
    <property type="match status" value="1"/>
</dbReference>
<dbReference type="InterPro" id="IPR006638">
    <property type="entry name" value="Elp3/MiaA/NifB-like_rSAM"/>
</dbReference>
<dbReference type="InterPro" id="IPR005839">
    <property type="entry name" value="Methylthiotransferase"/>
</dbReference>
<dbReference type="InterPro" id="IPR020612">
    <property type="entry name" value="Methylthiotransferase_CS"/>
</dbReference>
<dbReference type="InterPro" id="IPR013848">
    <property type="entry name" value="Methylthiotransferase_N"/>
</dbReference>
<dbReference type="InterPro" id="IPR038135">
    <property type="entry name" value="Methylthiotransferase_N_sf"/>
</dbReference>
<dbReference type="InterPro" id="IPR006463">
    <property type="entry name" value="MiaB_methiolase"/>
</dbReference>
<dbReference type="InterPro" id="IPR007197">
    <property type="entry name" value="rSAM"/>
</dbReference>
<dbReference type="InterPro" id="IPR023404">
    <property type="entry name" value="rSAM_horseshoe"/>
</dbReference>
<dbReference type="InterPro" id="IPR002792">
    <property type="entry name" value="TRAM_dom"/>
</dbReference>
<dbReference type="NCBIfam" id="TIGR01574">
    <property type="entry name" value="miaB-methiolase"/>
    <property type="match status" value="1"/>
</dbReference>
<dbReference type="NCBIfam" id="TIGR00089">
    <property type="entry name" value="MiaB/RimO family radical SAM methylthiotransferase"/>
    <property type="match status" value="1"/>
</dbReference>
<dbReference type="PANTHER" id="PTHR43020">
    <property type="entry name" value="CDK5 REGULATORY SUBUNIT-ASSOCIATED PROTEIN 1"/>
    <property type="match status" value="1"/>
</dbReference>
<dbReference type="PANTHER" id="PTHR43020:SF2">
    <property type="entry name" value="MITOCHONDRIAL TRNA METHYLTHIOTRANSFERASE CDK5RAP1"/>
    <property type="match status" value="1"/>
</dbReference>
<dbReference type="Pfam" id="PF04055">
    <property type="entry name" value="Radical_SAM"/>
    <property type="match status" value="1"/>
</dbReference>
<dbReference type="Pfam" id="PF01938">
    <property type="entry name" value="TRAM"/>
    <property type="match status" value="1"/>
</dbReference>
<dbReference type="Pfam" id="PF00919">
    <property type="entry name" value="UPF0004"/>
    <property type="match status" value="1"/>
</dbReference>
<dbReference type="SFLD" id="SFLDF00273">
    <property type="entry name" value="(dimethylallyl)adenosine_tRNA"/>
    <property type="match status" value="1"/>
</dbReference>
<dbReference type="SFLD" id="SFLDG01082">
    <property type="entry name" value="B12-binding_domain_containing"/>
    <property type="match status" value="1"/>
</dbReference>
<dbReference type="SFLD" id="SFLDS00029">
    <property type="entry name" value="Radical_SAM"/>
    <property type="match status" value="1"/>
</dbReference>
<dbReference type="SMART" id="SM00729">
    <property type="entry name" value="Elp3"/>
    <property type="match status" value="1"/>
</dbReference>
<dbReference type="SUPFAM" id="SSF102114">
    <property type="entry name" value="Radical SAM enzymes"/>
    <property type="match status" value="1"/>
</dbReference>
<dbReference type="PROSITE" id="PS51449">
    <property type="entry name" value="MTTASE_N"/>
    <property type="match status" value="1"/>
</dbReference>
<dbReference type="PROSITE" id="PS01278">
    <property type="entry name" value="MTTASE_RADICAL"/>
    <property type="match status" value="1"/>
</dbReference>
<dbReference type="PROSITE" id="PS51918">
    <property type="entry name" value="RADICAL_SAM"/>
    <property type="match status" value="1"/>
</dbReference>
<dbReference type="PROSITE" id="PS50926">
    <property type="entry name" value="TRAM"/>
    <property type="match status" value="1"/>
</dbReference>